<protein>
    <recommendedName>
        <fullName>Serine/threonine-protein phosphatase 4 regulatory subunit 1</fullName>
    </recommendedName>
</protein>
<evidence type="ECO:0000256" key="1">
    <source>
        <dbReference type="SAM" id="MobiDB-lite"/>
    </source>
</evidence>
<evidence type="ECO:0000269" key="2">
    <source>
    </source>
</evidence>
<evidence type="ECO:0000269" key="3">
    <source>
    </source>
</evidence>
<evidence type="ECO:0000269" key="4">
    <source>
    </source>
</evidence>
<evidence type="ECO:0000269" key="5">
    <source>
    </source>
</evidence>
<evidence type="ECO:0000269" key="6">
    <source>
    </source>
</evidence>
<evidence type="ECO:0000303" key="7">
    <source>
    </source>
</evidence>
<evidence type="ECO:0000303" key="8">
    <source>
    </source>
</evidence>
<evidence type="ECO:0000305" key="9"/>
<evidence type="ECO:0007744" key="10">
    <source>
    </source>
</evidence>
<comment type="function">
    <text evidence="4">Regulatory subunit of serine/threonine-protein phosphatase 4. May play a role in regulation of cell division in renal glomeruli. The PPP4C-PPP4R1 PP4 complex may play a role in dephosphorylation and regulation of HDAC3. Plays a role in the inhibition of TNF-induced NF-kappa-B activation by regulating the dephosphorylation of TRAF2.</text>
</comment>
<comment type="function">
    <text evidence="6">(Microbial infection) Participates in merkel polyomavirus-mediated inhibition of NF-kappa-B by bridging viral small tumor antigen with NEMO.</text>
</comment>
<comment type="subunit">
    <text evidence="2 3 4 5 6">Serine/threonine-protein phosphatase 4 (PP4) occurs in different assemblies of the catalytic and one or more regulatory subunits. Component of the PP4 complex PPP4C-PPP4R1. Interacts with HDAC3.</text>
</comment>
<comment type="subunit">
    <text evidence="6">(Microbial infection) Interacts with merkel polyomavirus small tumor antigen; this interaction bridges small tumor antigen with NEMO to inhibit NF-kappa-B.</text>
</comment>
<comment type="interaction">
    <interactant intactId="EBI-1056262">
        <id>Q8TF05</id>
    </interactant>
    <interactant intactId="EBI-1046072">
        <id>P60510</id>
        <label>PPP4C</label>
    </interactant>
    <organismsDiffer>false</organismsDiffer>
    <experiments>10</experiments>
</comment>
<comment type="alternative products">
    <event type="alternative splicing"/>
    <isoform>
        <id>Q8TF05-1</id>
        <name>1</name>
        <name>PP4Rmeg</name>
        <sequence type="displayed"/>
    </isoform>
    <isoform>
        <id>Q8TF05-2</id>
        <name>2</name>
        <sequence type="described" ref="VSP_009469"/>
    </isoform>
</comment>
<comment type="tissue specificity">
    <text evidence="3">Widely expressed with high expression in cultured mesangial cells. Isoform 1 and isoform 2 are expressed in renal tissues.</text>
</comment>
<comment type="sequence caution" evidence="9">
    <conflict type="erroneous initiation">
        <sequence resource="EMBL-CDS" id="AAD43008"/>
    </conflict>
</comment>
<name>PP4R1_HUMAN</name>
<gene>
    <name type="primary">PPP4R1</name>
    <name type="synonym">MEG1</name>
    <name type="synonym">PP4R1</name>
</gene>
<sequence length="950" mass="107004">MADLSLLQEDLQEDADGFGVDDYSSESDVIIIPSALDFVSQDEMLTPLGRLDKYAASENIFNRQMVARSLLDTLREVCDDERDCIAVLERISRLADDSEPTVRAELMEQVPHIALFCQENRPSIPYAFSKFLLPIVVRYLADQNNQVRKTSQAALLALLEQELIERFDVETKVCPVLIELTAPDSNDDVKTEAVAIMCKMAPMVGKDITERLILPRFCEMCCDCRMFHVRKVCAANFGDICSVVGQQATEEMLLPRFFQLCSDNVWGVRKACAECFMAVSCATCQEIRRTKLSALFINLISDPSRWVRQAAFQSLGPFISTFANPSSSGQYFKEESKSSEEMSVENKNRTRDQEAPEDVQVRPEDTPSDLSVSNSSVILENTMEDHAAEASGKPLGEISVPLDSSLLCTLSSESHQEAASNENDKKPGNYKSMLRPEVGTTSQDSALLDQELYNSFHFWRTPLPEIDLDIELEQNSGGKPSPEGPEEESEGPVPSSPNITMATRKELEEMIENLEPHIDDPDVKAQVEVLSAALRASSLDAHEETISIEKRSDLQDELDINELPNCKINQEDSVPLISDAVENMDSTLHYIHSDSDLSNNSSFSPDEERRTKVQDVVPQALLDQYLSMTDPSRAQTVDTEIAKHCAYSLPGVALTLGRQNWHCLRETYETLASDMQWKVRRTLAFSIHELAVILGDQLTAADLVPIFNGFLKDLDEVRIGVLKHLHDFLKLLHIDKRREYLYQLQEFLVTDNSRNWRFRAELAEQLILLLELYSPRDVYDYLRPIALNLCADKVSSVRWISYKLVSEMVKKLHAATPPTFGVDLINELVENFGRCPKWSGRQAFVFVCQTVIEDDCLPMDQFAVHLMPHLLTLANDRVPNVRVLLAKTLRQTLLEKDYFLASASCHQEAVEQTIMALQMDRDSDVKYFASIHPASTKISEDAMSTASSTY</sequence>
<feature type="chain" id="PRO_0000071527" description="Serine/threonine-protein phosphatase 4 regulatory subunit 1">
    <location>
        <begin position="1"/>
        <end position="950"/>
    </location>
</feature>
<feature type="repeat" description="HEAT 1">
    <location>
        <begin position="1"/>
        <end position="25"/>
    </location>
</feature>
<feature type="repeat" description="HEAT 2">
    <location>
        <begin position="26"/>
        <end position="63"/>
    </location>
</feature>
<feature type="repeat" description="HEAT 3">
    <location>
        <begin position="65"/>
        <end position="81"/>
    </location>
</feature>
<feature type="repeat" description="HEAT 4">
    <location>
        <begin position="82"/>
        <end position="119"/>
    </location>
</feature>
<feature type="repeat" description="HEAT 5">
    <location>
        <begin position="127"/>
        <end position="164"/>
    </location>
</feature>
<feature type="repeat" description="HEAT 6">
    <location>
        <begin position="168"/>
        <end position="206"/>
    </location>
</feature>
<feature type="repeat" description="HEAT 7">
    <location>
        <begin position="208"/>
        <end position="246"/>
    </location>
</feature>
<feature type="repeat" description="HEAT 8">
    <location>
        <begin position="248"/>
        <end position="285"/>
    </location>
</feature>
<feature type="repeat" description="HEAT 9">
    <location>
        <begin position="287"/>
        <end position="324"/>
    </location>
</feature>
<feature type="repeat" description="HEAT 10">
    <location>
        <begin position="505"/>
        <end position="542"/>
    </location>
</feature>
<feature type="repeat" description="HEAT 11">
    <location>
        <begin position="568"/>
        <end position="606"/>
    </location>
</feature>
<feature type="repeat" description="HEAT 12">
    <location>
        <begin position="698"/>
        <end position="734"/>
    </location>
</feature>
<feature type="repeat" description="HEAT 13">
    <location>
        <begin position="799"/>
        <end position="837"/>
    </location>
</feature>
<feature type="repeat" description="HEAT 14">
    <location>
        <begin position="861"/>
        <end position="898"/>
    </location>
</feature>
<feature type="region of interest" description="Disordered" evidence="1">
    <location>
        <begin position="326"/>
        <end position="374"/>
    </location>
</feature>
<feature type="region of interest" description="Disordered" evidence="1">
    <location>
        <begin position="413"/>
        <end position="438"/>
    </location>
</feature>
<feature type="region of interest" description="Disordered" evidence="1">
    <location>
        <begin position="473"/>
        <end position="499"/>
    </location>
</feature>
<feature type="compositionally biased region" description="Basic and acidic residues" evidence="1">
    <location>
        <begin position="332"/>
        <end position="365"/>
    </location>
</feature>
<feature type="modified residue" description="Phosphoserine" evidence="10">
    <location>
        <position position="935"/>
    </location>
</feature>
<feature type="splice variant" id="VSP_009469" description="In isoform 2." evidence="7 8">
    <original>FGVDDYSSESDVIIIPSA</original>
    <variation>S</variation>
    <location>
        <begin position="18"/>
        <end position="35"/>
    </location>
</feature>
<feature type="sequence variant" id="VAR_017807" description="In dbSNP:rs1056191.">
    <original>E</original>
    <variation>K</variation>
    <location>
        <position position="43"/>
    </location>
</feature>
<feature type="sequence variant" id="VAR_017808" description="In dbSNP:rs329003.">
    <original>I</original>
    <variation>V</variation>
    <location>
        <position position="470"/>
    </location>
</feature>
<feature type="sequence variant" id="VAR_051748" description="In dbSNP:rs2306134.">
    <original>S</original>
    <variation>N</variation>
    <location>
        <position position="593"/>
    </location>
</feature>
<feature type="sequence variant" id="VAR_017809" description="In dbSNP:rs2306134.">
    <original>S</original>
    <variation>N</variation>
    <location>
        <position position="595"/>
    </location>
</feature>
<dbReference type="EMBL" id="AF111106">
    <property type="protein sequence ID" value="AAD09818.1"/>
    <property type="molecule type" value="mRNA"/>
</dbReference>
<dbReference type="EMBL" id="AF200478">
    <property type="protein sequence ID" value="AAL78298.1"/>
    <property type="molecule type" value="mRNA"/>
</dbReference>
<dbReference type="EMBL" id="AP000902">
    <property type="status" value="NOT_ANNOTATED_CDS"/>
    <property type="molecule type" value="Genomic_DNA"/>
</dbReference>
<dbReference type="EMBL" id="AP001381">
    <property type="status" value="NOT_ANNOTATED_CDS"/>
    <property type="molecule type" value="Genomic_DNA"/>
</dbReference>
<dbReference type="EMBL" id="BC060829">
    <property type="protein sequence ID" value="AAH60829.1"/>
    <property type="molecule type" value="mRNA"/>
</dbReference>
<dbReference type="EMBL" id="AF100744">
    <property type="protein sequence ID" value="AAD43008.1"/>
    <property type="status" value="ALT_INIT"/>
    <property type="molecule type" value="mRNA"/>
</dbReference>
<dbReference type="EMBL" id="U79267">
    <property type="protein sequence ID" value="AAB50211.1"/>
    <property type="molecule type" value="mRNA"/>
</dbReference>
<dbReference type="CCDS" id="CCDS42412.1">
    <molecule id="Q8TF05-1"/>
</dbReference>
<dbReference type="CCDS" id="CCDS42413.1">
    <molecule id="Q8TF05-2"/>
</dbReference>
<dbReference type="RefSeq" id="NP_001035847.1">
    <molecule id="Q8TF05-1"/>
    <property type="nucleotide sequence ID" value="NM_001042388.3"/>
</dbReference>
<dbReference type="RefSeq" id="NP_005125.1">
    <molecule id="Q8TF05-2"/>
    <property type="nucleotide sequence ID" value="NM_005134.4"/>
</dbReference>
<dbReference type="BioGRID" id="115310">
    <property type="interactions" value="82"/>
</dbReference>
<dbReference type="ComplexPortal" id="CPX-1842">
    <property type="entry name" value="PPP4C-PPP4R1 protein phosphatase 4 complex"/>
</dbReference>
<dbReference type="CORUM" id="Q8TF05"/>
<dbReference type="FunCoup" id="Q8TF05">
    <property type="interactions" value="308"/>
</dbReference>
<dbReference type="IntAct" id="Q8TF05">
    <property type="interactions" value="35"/>
</dbReference>
<dbReference type="MINT" id="Q8TF05"/>
<dbReference type="STRING" id="9606.ENSP00000383402"/>
<dbReference type="GlyGen" id="Q8TF05">
    <property type="glycosylation" value="1 site, 1 O-linked glycan (1 site)"/>
</dbReference>
<dbReference type="iPTMnet" id="Q8TF05"/>
<dbReference type="MetOSite" id="Q8TF05"/>
<dbReference type="PhosphoSitePlus" id="Q8TF05"/>
<dbReference type="SwissPalm" id="Q8TF05"/>
<dbReference type="BioMuta" id="PPP4R1"/>
<dbReference type="DMDM" id="44888283"/>
<dbReference type="jPOST" id="Q8TF05"/>
<dbReference type="MassIVE" id="Q8TF05"/>
<dbReference type="PaxDb" id="9606-ENSP00000383402"/>
<dbReference type="PeptideAtlas" id="Q8TF05"/>
<dbReference type="ProteomicsDB" id="74532">
    <molecule id="Q8TF05-1"/>
</dbReference>
<dbReference type="ProteomicsDB" id="74533">
    <molecule id="Q8TF05-2"/>
</dbReference>
<dbReference type="Pumba" id="Q8TF05"/>
<dbReference type="Antibodypedia" id="21930">
    <property type="antibodies" value="110 antibodies from 25 providers"/>
</dbReference>
<dbReference type="DNASU" id="9989"/>
<dbReference type="Ensembl" id="ENST00000400555.7">
    <molecule id="Q8TF05-2"/>
    <property type="protein sequence ID" value="ENSP00000383401.3"/>
    <property type="gene ID" value="ENSG00000154845.16"/>
</dbReference>
<dbReference type="Ensembl" id="ENST00000400556.8">
    <molecule id="Q8TF05-1"/>
    <property type="protein sequence ID" value="ENSP00000383402.3"/>
    <property type="gene ID" value="ENSG00000154845.16"/>
</dbReference>
<dbReference type="GeneID" id="9989"/>
<dbReference type="KEGG" id="hsa:9989"/>
<dbReference type="MANE-Select" id="ENST00000400556.8">
    <property type="protein sequence ID" value="ENSP00000383402.3"/>
    <property type="RefSeq nucleotide sequence ID" value="NM_001042388.3"/>
    <property type="RefSeq protein sequence ID" value="NP_001035847.1"/>
</dbReference>
<dbReference type="UCSC" id="uc002kod.3">
    <molecule id="Q8TF05-1"/>
    <property type="organism name" value="human"/>
</dbReference>
<dbReference type="AGR" id="HGNC:9320"/>
<dbReference type="CTD" id="9989"/>
<dbReference type="DisGeNET" id="9989"/>
<dbReference type="GeneCards" id="PPP4R1"/>
<dbReference type="HGNC" id="HGNC:9320">
    <property type="gene designation" value="PPP4R1"/>
</dbReference>
<dbReference type="HPA" id="ENSG00000154845">
    <property type="expression patterns" value="Low tissue specificity"/>
</dbReference>
<dbReference type="MIM" id="604908">
    <property type="type" value="gene"/>
</dbReference>
<dbReference type="neXtProt" id="NX_Q8TF05"/>
<dbReference type="OpenTargets" id="ENSG00000154845"/>
<dbReference type="PharmGKB" id="PA33684"/>
<dbReference type="VEuPathDB" id="HostDB:ENSG00000154845"/>
<dbReference type="eggNOG" id="KOG0211">
    <property type="taxonomic scope" value="Eukaryota"/>
</dbReference>
<dbReference type="GeneTree" id="ENSGT00950000183066"/>
<dbReference type="HOGENOM" id="CLU_009128_1_1_1"/>
<dbReference type="InParanoid" id="Q8TF05"/>
<dbReference type="OMA" id="CYIHNDS"/>
<dbReference type="OrthoDB" id="340346at2759"/>
<dbReference type="PAN-GO" id="Q8TF05">
    <property type="GO annotations" value="2 GO annotations based on evolutionary models"/>
</dbReference>
<dbReference type="PhylomeDB" id="Q8TF05"/>
<dbReference type="TreeFam" id="TF105560"/>
<dbReference type="PathwayCommons" id="Q8TF05"/>
<dbReference type="SignaLink" id="Q8TF05"/>
<dbReference type="BioGRID-ORCS" id="9989">
    <property type="hits" value="22 hits in 1169 CRISPR screens"/>
</dbReference>
<dbReference type="ChiTaRS" id="PPP4R1">
    <property type="organism name" value="human"/>
</dbReference>
<dbReference type="GeneWiki" id="PPP4R1"/>
<dbReference type="GenomeRNAi" id="9989"/>
<dbReference type="Pharos" id="Q8TF05">
    <property type="development level" value="Tbio"/>
</dbReference>
<dbReference type="PRO" id="PR:Q8TF05"/>
<dbReference type="Proteomes" id="UP000005640">
    <property type="component" value="Chromosome 18"/>
</dbReference>
<dbReference type="RNAct" id="Q8TF05">
    <property type="molecule type" value="protein"/>
</dbReference>
<dbReference type="Bgee" id="ENSG00000154845">
    <property type="expression patterns" value="Expressed in sperm and 204 other cell types or tissues"/>
</dbReference>
<dbReference type="ExpressionAtlas" id="Q8TF05">
    <property type="expression patterns" value="baseline and differential"/>
</dbReference>
<dbReference type="GO" id="GO:0005737">
    <property type="term" value="C:cytoplasm"/>
    <property type="evidence" value="ECO:0000318"/>
    <property type="project" value="GO_Central"/>
</dbReference>
<dbReference type="GO" id="GO:0030289">
    <property type="term" value="C:protein phosphatase 4 complex"/>
    <property type="evidence" value="ECO:0000250"/>
    <property type="project" value="UniProtKB"/>
</dbReference>
<dbReference type="GO" id="GO:0019888">
    <property type="term" value="F:protein phosphatase regulator activity"/>
    <property type="evidence" value="ECO:0000318"/>
    <property type="project" value="GO_Central"/>
</dbReference>
<dbReference type="GO" id="GO:0006468">
    <property type="term" value="P:protein phosphorylation"/>
    <property type="evidence" value="ECO:0000250"/>
    <property type="project" value="UniProtKB"/>
</dbReference>
<dbReference type="GO" id="GO:0007165">
    <property type="term" value="P:signal transduction"/>
    <property type="evidence" value="ECO:0000303"/>
    <property type="project" value="UniProtKB"/>
</dbReference>
<dbReference type="FunFam" id="1.25.10.10:FF:000156">
    <property type="entry name" value="Serine/threonine-protein phosphatase 4 regulatory subunit 1"/>
    <property type="match status" value="1"/>
</dbReference>
<dbReference type="FunFam" id="1.25.10.10:FF:000161">
    <property type="entry name" value="serine/threonine-protein phosphatase 4 regulatory subunit 1"/>
    <property type="match status" value="1"/>
</dbReference>
<dbReference type="Gene3D" id="1.25.10.10">
    <property type="entry name" value="Leucine-rich Repeat Variant"/>
    <property type="match status" value="3"/>
</dbReference>
<dbReference type="InterPro" id="IPR011989">
    <property type="entry name" value="ARM-like"/>
</dbReference>
<dbReference type="InterPro" id="IPR016024">
    <property type="entry name" value="ARM-type_fold"/>
</dbReference>
<dbReference type="InterPro" id="IPR000357">
    <property type="entry name" value="HEAT"/>
</dbReference>
<dbReference type="InterPro" id="IPR021133">
    <property type="entry name" value="HEAT_type_2"/>
</dbReference>
<dbReference type="InterPro" id="IPR051023">
    <property type="entry name" value="PP2A_Regulatory_Subunit_A"/>
</dbReference>
<dbReference type="InterPro" id="IPR033461">
    <property type="entry name" value="WRNPLPNID"/>
</dbReference>
<dbReference type="PANTHER" id="PTHR10648">
    <property type="entry name" value="SERINE/THREONINE-PROTEIN PHOSPHATASE PP2A 65 KDA REGULATORY SUBUNIT"/>
    <property type="match status" value="1"/>
</dbReference>
<dbReference type="PANTHER" id="PTHR10648:SF8">
    <property type="entry name" value="SERINE_THREONINE-PROTEIN PHOSPHATASE 4 REGULATORY SUBUNIT 1"/>
    <property type="match status" value="1"/>
</dbReference>
<dbReference type="Pfam" id="PF02985">
    <property type="entry name" value="HEAT"/>
    <property type="match status" value="1"/>
</dbReference>
<dbReference type="Pfam" id="PF15017">
    <property type="entry name" value="WRNPLPNID"/>
    <property type="match status" value="1"/>
</dbReference>
<dbReference type="SUPFAM" id="SSF48371">
    <property type="entry name" value="ARM repeat"/>
    <property type="match status" value="1"/>
</dbReference>
<dbReference type="PROSITE" id="PS50077">
    <property type="entry name" value="HEAT_REPEAT"/>
    <property type="match status" value="2"/>
</dbReference>
<accession>Q8TF05</accession>
<accession>Q99774</accession>
<accession>Q9UNQ7</accession>
<reference key="1">
    <citation type="journal article" date="1999" name="J. Biol. Chem.">
        <title>Purification and identification of a novel subunit of protein serine/threonine phosphatase 4.</title>
        <authorList>
            <person name="Kloeker S."/>
            <person name="Wadzinski B.E."/>
        </authorList>
    </citation>
    <scope>NUCLEOTIDE SEQUENCE [MRNA] (ISOFORM 2)</scope>
    <scope>SUBUNIT</scope>
    <source>
        <tissue>Neuroepithelium</tissue>
    </source>
</reference>
<reference key="2">
    <citation type="journal article" date="2001" name="J. Am. Soc. Nephrol.">
        <title>Cloning and characterization of a novel subunit of protein serine/threonine phosphatase 4 from mesangial cells.</title>
        <authorList>
            <person name="Wada T."/>
            <person name="Miyata T."/>
            <person name="Inagi R."/>
            <person name="Nangaku M."/>
            <person name="Wagatsuma M."/>
            <person name="Suzuki D."/>
            <person name="Wadzinski B.E."/>
            <person name="Okubo K."/>
            <person name="Kurokawa K."/>
        </authorList>
    </citation>
    <scope>NUCLEOTIDE SEQUENCE [MRNA] (ISOFORM 1)</scope>
    <scope>SUBUNIT</scope>
    <scope>TISSUE SPECIFICITY</scope>
</reference>
<reference key="3">
    <citation type="journal article" date="2005" name="Nature">
        <title>DNA sequence and analysis of human chromosome 18.</title>
        <authorList>
            <person name="Nusbaum C."/>
            <person name="Zody M.C."/>
            <person name="Borowsky M.L."/>
            <person name="Kamal M."/>
            <person name="Kodira C.D."/>
            <person name="Taylor T.D."/>
            <person name="Whittaker C.A."/>
            <person name="Chang J.L."/>
            <person name="Cuomo C.A."/>
            <person name="Dewar K."/>
            <person name="FitzGerald M.G."/>
            <person name="Yang X."/>
            <person name="Abouelleil A."/>
            <person name="Allen N.R."/>
            <person name="Anderson S."/>
            <person name="Bloom T."/>
            <person name="Bugalter B."/>
            <person name="Butler J."/>
            <person name="Cook A."/>
            <person name="DeCaprio D."/>
            <person name="Engels R."/>
            <person name="Garber M."/>
            <person name="Gnirke A."/>
            <person name="Hafez N."/>
            <person name="Hall J.L."/>
            <person name="Norman C.H."/>
            <person name="Itoh T."/>
            <person name="Jaffe D.B."/>
            <person name="Kuroki Y."/>
            <person name="Lehoczky J."/>
            <person name="Lui A."/>
            <person name="Macdonald P."/>
            <person name="Mauceli E."/>
            <person name="Mikkelsen T.S."/>
            <person name="Naylor J.W."/>
            <person name="Nicol R."/>
            <person name="Nguyen C."/>
            <person name="Noguchi H."/>
            <person name="O'Leary S.B."/>
            <person name="Piqani B."/>
            <person name="Smith C.L."/>
            <person name="Talamas J.A."/>
            <person name="Topham K."/>
            <person name="Totoki Y."/>
            <person name="Toyoda A."/>
            <person name="Wain H.M."/>
            <person name="Young S.K."/>
            <person name="Zeng Q."/>
            <person name="Zimmer A.R."/>
            <person name="Fujiyama A."/>
            <person name="Hattori M."/>
            <person name="Birren B.W."/>
            <person name="Sakaki Y."/>
            <person name="Lander E.S."/>
        </authorList>
    </citation>
    <scope>NUCLEOTIDE SEQUENCE [LARGE SCALE GENOMIC DNA]</scope>
</reference>
<reference key="4">
    <citation type="journal article" date="2004" name="Genome Res.">
        <title>The status, quality, and expansion of the NIH full-length cDNA project: the Mammalian Gene Collection (MGC).</title>
        <authorList>
            <consortium name="The MGC Project Team"/>
        </authorList>
    </citation>
    <scope>NUCLEOTIDE SEQUENCE [LARGE SCALE MRNA] (ISOFORM 2)</scope>
    <source>
        <tissue>Placenta</tissue>
    </source>
</reference>
<reference key="5">
    <citation type="submission" date="1998-10" db="EMBL/GenBank/DDBJ databases">
        <title>Human hypothetical 19.5 kDa protein gene.</title>
        <authorList>
            <person name="Song H."/>
            <person name="Peng Y."/>
            <person name="Dai M."/>
            <person name="Huang Q."/>
            <person name="Mao Y."/>
            <person name="Zhang Q."/>
            <person name="Mao M."/>
            <person name="Fu G."/>
            <person name="Luo M."/>
            <person name="Chen J."/>
            <person name="Hu R."/>
        </authorList>
    </citation>
    <scope>NUCLEOTIDE SEQUENCE [MRNA] OF 571-950 (ISOFORMS 1/2)</scope>
    <source>
        <tissue>Pituitary</tissue>
    </source>
</reference>
<reference key="6">
    <citation type="journal article" date="1997" name="Genome Res.">
        <title>Large-scale concatenation cDNA sequencing.</title>
        <authorList>
            <person name="Yu W."/>
            <person name="Andersson B."/>
            <person name="Worley K.C."/>
            <person name="Muzny D.M."/>
            <person name="Ding Y."/>
            <person name="Liu W."/>
            <person name="Ricafrente J.Y."/>
            <person name="Wentland M.A."/>
            <person name="Lennon G."/>
            <person name="Gibbs R.A."/>
        </authorList>
    </citation>
    <scope>NUCLEOTIDE SEQUENCE [LARGE SCALE MRNA] OF 778-950 (ISOFORMS 1/2)</scope>
    <source>
        <tissue>Brain</tissue>
    </source>
</reference>
<reference key="7">
    <citation type="journal article" date="2005" name="Genes Dev.">
        <title>Histone deacetylase 3 (HDAC3) activity is regulated by interaction with protein serine/threonine phosphatase 4.</title>
        <authorList>
            <person name="Zhang X."/>
            <person name="Ozawa Y."/>
            <person name="Lee H."/>
            <person name="Wen Y.D."/>
            <person name="Tan T.H."/>
            <person name="Wadzinski B.E."/>
            <person name="Seto E."/>
        </authorList>
    </citation>
    <scope>INTERACTION WITH HDAC3</scope>
    <scope>FUNCTION OF THE PPP4C-PPP4R1 COMPLEX</scope>
</reference>
<reference key="8">
    <citation type="journal article" date="2008" name="Mol. Cell">
        <title>A PP4-phosphatase complex dephosphorylates gamma-H2AX generated during DNA replication.</title>
        <authorList>
            <person name="Chowdhury D."/>
            <person name="Xu X."/>
            <person name="Zhong X."/>
            <person name="Ahmed F."/>
            <person name="Zhong J."/>
            <person name="Liao J."/>
            <person name="Dykxhoorn D.M."/>
            <person name="Weinstock D.M."/>
            <person name="Pfeifer G.P."/>
            <person name="Lieberman J."/>
        </authorList>
    </citation>
    <scope>IDENTIFICATION IN THE PPP4C-PPP4R1 COMPLEX</scope>
</reference>
<reference key="9">
    <citation type="journal article" date="2011" name="BMC Syst. Biol.">
        <title>Initial characterization of the human central proteome.</title>
        <authorList>
            <person name="Burkard T.R."/>
            <person name="Planyavsky M."/>
            <person name="Kaupe I."/>
            <person name="Breitwieser F.P."/>
            <person name="Buerckstuemmer T."/>
            <person name="Bennett K.L."/>
            <person name="Superti-Furga G."/>
            <person name="Colinge J."/>
        </authorList>
    </citation>
    <scope>IDENTIFICATION BY MASS SPECTROMETRY [LARGE SCALE ANALYSIS]</scope>
</reference>
<reference key="10">
    <citation type="journal article" date="2013" name="J. Proteome Res.">
        <title>Toward a comprehensive characterization of a human cancer cell phosphoproteome.</title>
        <authorList>
            <person name="Zhou H."/>
            <person name="Di Palma S."/>
            <person name="Preisinger C."/>
            <person name="Peng M."/>
            <person name="Polat A.N."/>
            <person name="Heck A.J."/>
            <person name="Mohammed S."/>
        </authorList>
    </citation>
    <scope>PHOSPHORYLATION [LARGE SCALE ANALYSIS] AT SER-935</scope>
    <scope>IDENTIFICATION BY MASS SPECTROMETRY [LARGE SCALE ANALYSIS]</scope>
    <source>
        <tissue>Erythroleukemia</tissue>
    </source>
</reference>
<reference key="11">
    <citation type="journal article" date="2014" name="Cell. Signal.">
        <title>The PP4R1 subunit of protein phosphatase PP4 targets TRAF2 and TRAF6 to mediate inhibition of NF-kappaB activation.</title>
        <authorList>
            <person name="Hadweh P."/>
            <person name="Habelhah H."/>
            <person name="Kieff E."/>
            <person name="Mosialos G."/>
            <person name="Hatzivassiliou E."/>
        </authorList>
    </citation>
    <scope>FUNCTION</scope>
</reference>
<reference key="12">
    <citation type="journal article" date="2017" name="Oncotarget">
        <title>The PP4R1 sub-unit of protein phosphatase PP4 is essential for inhibition of NF-kappaB by merkel polyomavirus small tumour antigen.</title>
        <authorList>
            <person name="Abdul-Sada H."/>
            <person name="Mueller M."/>
            <person name="Mehta R."/>
            <person name="Toth R."/>
            <person name="Arthur J.S.C."/>
            <person name="Whitehouse A."/>
            <person name="Macdonald A."/>
        </authorList>
    </citation>
    <scope>FUNCTION (MICROBIAL INFECTION)</scope>
    <scope>INTERACTION WITH MERKEL POLYOMAVIRUS SMALL TUMOR ANTIGEN (MICROBIAL INFECTION)</scope>
</reference>
<organism>
    <name type="scientific">Homo sapiens</name>
    <name type="common">Human</name>
    <dbReference type="NCBI Taxonomy" id="9606"/>
    <lineage>
        <taxon>Eukaryota</taxon>
        <taxon>Metazoa</taxon>
        <taxon>Chordata</taxon>
        <taxon>Craniata</taxon>
        <taxon>Vertebrata</taxon>
        <taxon>Euteleostomi</taxon>
        <taxon>Mammalia</taxon>
        <taxon>Eutheria</taxon>
        <taxon>Euarchontoglires</taxon>
        <taxon>Primates</taxon>
        <taxon>Haplorrhini</taxon>
        <taxon>Catarrhini</taxon>
        <taxon>Hominidae</taxon>
        <taxon>Homo</taxon>
    </lineage>
</organism>
<proteinExistence type="evidence at protein level"/>
<keyword id="KW-0025">Alternative splicing</keyword>
<keyword id="KW-0597">Phosphoprotein</keyword>
<keyword id="KW-1267">Proteomics identification</keyword>
<keyword id="KW-1185">Reference proteome</keyword>
<keyword id="KW-0677">Repeat</keyword>